<protein>
    <recommendedName>
        <fullName>Aldehyde reductase YahK</fullName>
        <ecNumber>1.1.1.2</ecNumber>
    </recommendedName>
    <alternativeName>
        <fullName>Zinc-dependent alcohol dehydrogenase YahK</fullName>
    </alternativeName>
</protein>
<evidence type="ECO:0000269" key="1">
    <source>
    </source>
</evidence>
<evidence type="ECO:0000269" key="2">
    <source>
    </source>
</evidence>
<evidence type="ECO:0000269" key="3">
    <source ref="6"/>
</evidence>
<evidence type="ECO:0000305" key="4"/>
<evidence type="ECO:0007829" key="5">
    <source>
        <dbReference type="PDB" id="1UUF"/>
    </source>
</evidence>
<keyword id="KW-0002">3D-structure</keyword>
<keyword id="KW-0479">Metal-binding</keyword>
<keyword id="KW-0521">NADP</keyword>
<keyword id="KW-0560">Oxidoreductase</keyword>
<keyword id="KW-1185">Reference proteome</keyword>
<keyword id="KW-0862">Zinc</keyword>
<reference key="1">
    <citation type="submission" date="1997-01" db="EMBL/GenBank/DDBJ databases">
        <title>Sequence of minutes 4-25 of Escherichia coli.</title>
        <authorList>
            <person name="Chung E."/>
            <person name="Allen E."/>
            <person name="Araujo R."/>
            <person name="Aparicio A.M."/>
            <person name="Davis K."/>
            <person name="Duncan M."/>
            <person name="Federspiel N."/>
            <person name="Hyman R."/>
            <person name="Kalman S."/>
            <person name="Komp C."/>
            <person name="Kurdi O."/>
            <person name="Lew H."/>
            <person name="Lin D."/>
            <person name="Namath A."/>
            <person name="Oefner P."/>
            <person name="Roberts D."/>
            <person name="Schramm S."/>
            <person name="Davis R.W."/>
        </authorList>
    </citation>
    <scope>NUCLEOTIDE SEQUENCE [LARGE SCALE GENOMIC DNA]</scope>
    <source>
        <strain>K12 / MG1655 / ATCC 47076</strain>
    </source>
</reference>
<reference key="2">
    <citation type="journal article" date="1997" name="Science">
        <title>The complete genome sequence of Escherichia coli K-12.</title>
        <authorList>
            <person name="Blattner F.R."/>
            <person name="Plunkett G. III"/>
            <person name="Bloch C.A."/>
            <person name="Perna N.T."/>
            <person name="Burland V."/>
            <person name="Riley M."/>
            <person name="Collado-Vides J."/>
            <person name="Glasner J.D."/>
            <person name="Rode C.K."/>
            <person name="Mayhew G.F."/>
            <person name="Gregor J."/>
            <person name="Davis N.W."/>
            <person name="Kirkpatrick H.A."/>
            <person name="Goeden M.A."/>
            <person name="Rose D.J."/>
            <person name="Mau B."/>
            <person name="Shao Y."/>
        </authorList>
    </citation>
    <scope>NUCLEOTIDE SEQUENCE [LARGE SCALE GENOMIC DNA]</scope>
    <source>
        <strain>K12 / MG1655 / ATCC 47076</strain>
    </source>
</reference>
<reference key="3">
    <citation type="journal article" date="2006" name="Mol. Syst. Biol.">
        <title>Highly accurate genome sequences of Escherichia coli K-12 strains MG1655 and W3110.</title>
        <authorList>
            <person name="Hayashi K."/>
            <person name="Morooka N."/>
            <person name="Yamamoto Y."/>
            <person name="Fujita K."/>
            <person name="Isono K."/>
            <person name="Choi S."/>
            <person name="Ohtsubo E."/>
            <person name="Baba T."/>
            <person name="Wanner B.L."/>
            <person name="Mori H."/>
            <person name="Horiuchi T."/>
        </authorList>
    </citation>
    <scope>NUCLEOTIDE SEQUENCE [LARGE SCALE GENOMIC DNA]</scope>
    <source>
        <strain>K12 / W3110 / ATCC 27325 / DSM 5911</strain>
    </source>
</reference>
<reference key="4">
    <citation type="journal article" date="2011" name="Metallomics">
        <title>Exploring the microbial metalloproteome using MIRAGE.</title>
        <authorList>
            <person name="Sevcenco A.M."/>
            <person name="Pinkse M.W."/>
            <person name="Wolterbeek H.T."/>
            <person name="Verhaert P.D."/>
            <person name="Hagen W.R."/>
            <person name="Hagedoorn P.L."/>
        </authorList>
    </citation>
    <scope>IDENTIFICATION BY MASS SPECTROMETRY</scope>
    <scope>ZINC-BINDING</scope>
    <scope>COFACTOR</scope>
</reference>
<reference key="5">
    <citation type="journal article" date="2013" name="Appl. Microbiol. Biotechnol.">
        <title>Novel CAD-like enzymes from Escherichia coli K-12 as additional tools in chemical production.</title>
        <authorList>
            <person name="Pick A."/>
            <person name="Ruhmann B."/>
            <person name="Schmid J."/>
            <person name="Sieber V."/>
        </authorList>
    </citation>
    <scope>IDENTIFICATION</scope>
    <scope>FUNCTION</scope>
    <scope>CATALYTIC ACTIVITY</scope>
    <scope>SUBSTRATE SPECIFICITY</scope>
    <scope>BIOPHYSICOCHEMICAL PROPERTIES</scope>
    <source>
        <strain>K12 / W3110 / ATCC 27325 / DSM 5911</strain>
    </source>
</reference>
<reference key="6">
    <citation type="submission" date="2003-12" db="PDB data bank">
        <title>Crystal structure of yahK, a zinc-type alcohol dehydrogenase-like protein.</title>
        <authorList>
            <person name="Jeudy S."/>
            <person name="Claverie J.-M."/>
            <person name="Abergel C."/>
        </authorList>
    </citation>
    <scope>X-RAY CRYSTALLOGRAPHY (1.76 ANGSTROMS) IN COMPLEX WITH ZINC IONS</scope>
    <scope>COFACTOR</scope>
</reference>
<accession>P75691</accession>
<accession>P71306</accession>
<accession>Q2MC98</accession>
<sequence>MKIKAVGAYSAKQPLEPMDITRREPGPNDVKIEIAYCGVCHSDLHQVRSEWAGTVYPCVPGHEIVGRVVAVGDQVEKYAPGDLVGVGCIVDSCKHCEECEDGLENYCDHMTGTYNSPTPDEPGHTLGGYSQQIVVHERYVLRIRHPQEQLAAVAPLLCAGITTYSPLRHWQAGPGKKVGVVGIGGLGHMGIKLAHAMGAHVVAFTTSEAKREAAKALGADEVVNSRNADEMAAHLKSFDFILNTVAAPHNLDDFTTLLKRDGTMTLVGAPATPHKSPEVFNLIMKRRAIAGSMIGGIPETQEMLDFCAEHGIVADIEMIRADQINEAYERMLRGDVKYRFVIDNRTLTD</sequence>
<proteinExistence type="evidence at protein level"/>
<dbReference type="EC" id="1.1.1.2"/>
<dbReference type="EMBL" id="U73857">
    <property type="protein sequence ID" value="AAB18051.1"/>
    <property type="molecule type" value="Genomic_DNA"/>
</dbReference>
<dbReference type="EMBL" id="U00096">
    <property type="protein sequence ID" value="AAC73428.1"/>
    <property type="molecule type" value="Genomic_DNA"/>
</dbReference>
<dbReference type="EMBL" id="AP009048">
    <property type="protein sequence ID" value="BAE76108.1"/>
    <property type="molecule type" value="Genomic_DNA"/>
</dbReference>
<dbReference type="PIR" id="E64759">
    <property type="entry name" value="E64759"/>
</dbReference>
<dbReference type="RefSeq" id="NP_414859.1">
    <property type="nucleotide sequence ID" value="NC_000913.3"/>
</dbReference>
<dbReference type="RefSeq" id="WP_000692754.1">
    <property type="nucleotide sequence ID" value="NZ_SSZK01000063.1"/>
</dbReference>
<dbReference type="PDB" id="1UUF">
    <property type="method" value="X-ray"/>
    <property type="resolution" value="1.76 A"/>
    <property type="chains" value="A=2-349"/>
</dbReference>
<dbReference type="PDBsum" id="1UUF"/>
<dbReference type="SMR" id="P75691"/>
<dbReference type="BioGRID" id="4259802">
    <property type="interactions" value="12"/>
</dbReference>
<dbReference type="BioGRID" id="849372">
    <property type="interactions" value="2"/>
</dbReference>
<dbReference type="DIP" id="DIP-11263N"/>
<dbReference type="FunCoup" id="P75691">
    <property type="interactions" value="345"/>
</dbReference>
<dbReference type="IntAct" id="P75691">
    <property type="interactions" value="10"/>
</dbReference>
<dbReference type="STRING" id="511145.b0325"/>
<dbReference type="jPOST" id="P75691"/>
<dbReference type="PaxDb" id="511145-b0325"/>
<dbReference type="EnsemblBacteria" id="AAC73428">
    <property type="protein sequence ID" value="AAC73428"/>
    <property type="gene ID" value="b0325"/>
</dbReference>
<dbReference type="GeneID" id="944975"/>
<dbReference type="KEGG" id="ecj:JW0317"/>
<dbReference type="KEGG" id="eco:b0325"/>
<dbReference type="KEGG" id="ecoc:C3026_01595"/>
<dbReference type="KEGG" id="ecoc:C3026_24765"/>
<dbReference type="PATRIC" id="fig|1411691.4.peg.1952"/>
<dbReference type="EchoBASE" id="EB3364"/>
<dbReference type="eggNOG" id="COG1064">
    <property type="taxonomic scope" value="Bacteria"/>
</dbReference>
<dbReference type="HOGENOM" id="CLU_026673_20_2_6"/>
<dbReference type="InParanoid" id="P75691"/>
<dbReference type="OMA" id="GWGEQKF"/>
<dbReference type="OrthoDB" id="9771084at2"/>
<dbReference type="PhylomeDB" id="P75691"/>
<dbReference type="BioCyc" id="EcoCyc:G6190-MONOMER"/>
<dbReference type="BioCyc" id="MetaCyc:G6190-MONOMER"/>
<dbReference type="EvolutionaryTrace" id="P75691"/>
<dbReference type="PRO" id="PR:P75691"/>
<dbReference type="Proteomes" id="UP000000625">
    <property type="component" value="Chromosome"/>
</dbReference>
<dbReference type="GO" id="GO:0008106">
    <property type="term" value="F:alcohol dehydrogenase (NADP+) activity"/>
    <property type="evidence" value="ECO:0000314"/>
    <property type="project" value="EcoCyc"/>
</dbReference>
<dbReference type="GO" id="GO:0016616">
    <property type="term" value="F:oxidoreductase activity, acting on the CH-OH group of donors, NAD or NADP as acceptor"/>
    <property type="evidence" value="ECO:0000318"/>
    <property type="project" value="GO_Central"/>
</dbReference>
<dbReference type="GO" id="GO:0008270">
    <property type="term" value="F:zinc ion binding"/>
    <property type="evidence" value="ECO:0007669"/>
    <property type="project" value="InterPro"/>
</dbReference>
<dbReference type="CDD" id="cd05283">
    <property type="entry name" value="CAD1"/>
    <property type="match status" value="1"/>
</dbReference>
<dbReference type="FunFam" id="3.40.50.720:FF:000022">
    <property type="entry name" value="Cinnamyl alcohol dehydrogenase"/>
    <property type="match status" value="1"/>
</dbReference>
<dbReference type="FunFam" id="3.90.180.10:FF:000025">
    <property type="entry name" value="Zinc-type alcohol dehydrogenase YahK"/>
    <property type="match status" value="1"/>
</dbReference>
<dbReference type="Gene3D" id="3.90.180.10">
    <property type="entry name" value="Medium-chain alcohol dehydrogenases, catalytic domain"/>
    <property type="match status" value="1"/>
</dbReference>
<dbReference type="Gene3D" id="3.40.50.720">
    <property type="entry name" value="NAD(P)-binding Rossmann-like Domain"/>
    <property type="match status" value="1"/>
</dbReference>
<dbReference type="InterPro" id="IPR013149">
    <property type="entry name" value="ADH-like_C"/>
</dbReference>
<dbReference type="InterPro" id="IPR013154">
    <property type="entry name" value="ADH-like_N"/>
</dbReference>
<dbReference type="InterPro" id="IPR002328">
    <property type="entry name" value="ADH_Zn_CS"/>
</dbReference>
<dbReference type="InterPro" id="IPR047109">
    <property type="entry name" value="CAD-like"/>
</dbReference>
<dbReference type="InterPro" id="IPR029752">
    <property type="entry name" value="D-isomer_DH_CS1"/>
</dbReference>
<dbReference type="InterPro" id="IPR011032">
    <property type="entry name" value="GroES-like_sf"/>
</dbReference>
<dbReference type="InterPro" id="IPR036291">
    <property type="entry name" value="NAD(P)-bd_dom_sf"/>
</dbReference>
<dbReference type="InterPro" id="IPR020843">
    <property type="entry name" value="PKS_ER"/>
</dbReference>
<dbReference type="PANTHER" id="PTHR42683">
    <property type="entry name" value="ALDEHYDE REDUCTASE"/>
    <property type="match status" value="1"/>
</dbReference>
<dbReference type="Pfam" id="PF08240">
    <property type="entry name" value="ADH_N"/>
    <property type="match status" value="1"/>
</dbReference>
<dbReference type="Pfam" id="PF00107">
    <property type="entry name" value="ADH_zinc_N"/>
    <property type="match status" value="1"/>
</dbReference>
<dbReference type="SMART" id="SM00829">
    <property type="entry name" value="PKS_ER"/>
    <property type="match status" value="1"/>
</dbReference>
<dbReference type="SUPFAM" id="SSF50129">
    <property type="entry name" value="GroES-like"/>
    <property type="match status" value="1"/>
</dbReference>
<dbReference type="SUPFAM" id="SSF51735">
    <property type="entry name" value="NAD(P)-binding Rossmann-fold domains"/>
    <property type="match status" value="1"/>
</dbReference>
<dbReference type="PROSITE" id="PS00059">
    <property type="entry name" value="ADH_ZINC"/>
    <property type="match status" value="1"/>
</dbReference>
<comment type="function">
    <text evidence="2">Catalyzes the reduction of a wide range of aldehydes into their corresponding alcohols. Has a strong preference for NADPH over NADH as the electron donor. Cannot use a ketone as substrate. Is a major source of NADPH-dependent aldehyde reductase activity in E.coli. The in vivo functions of YahK has yet to be determined.</text>
</comment>
<comment type="catalytic activity">
    <reaction evidence="2">
        <text>a primary alcohol + NADP(+) = an aldehyde + NADPH + H(+)</text>
        <dbReference type="Rhea" id="RHEA:15937"/>
        <dbReference type="ChEBI" id="CHEBI:15378"/>
        <dbReference type="ChEBI" id="CHEBI:15734"/>
        <dbReference type="ChEBI" id="CHEBI:17478"/>
        <dbReference type="ChEBI" id="CHEBI:57783"/>
        <dbReference type="ChEBI" id="CHEBI:58349"/>
        <dbReference type="EC" id="1.1.1.2"/>
    </reaction>
</comment>
<comment type="cofactor">
    <cofactor evidence="1 3">
        <name>Zn(2+)</name>
        <dbReference type="ChEBI" id="CHEBI:29105"/>
    </cofactor>
    <text evidence="1 3">Binds 2 Zn(2+) ions per subunit.</text>
</comment>
<comment type="biophysicochemical properties">
    <kinetics>
        <KM evidence="2">13.3 mM for acetaldehyde</KM>
        <KM evidence="2">10.9 mM for propionaldehyde</KM>
        <KM evidence="2">4.4 mM for glyceraldehyde</KM>
        <KM evidence="2">2.1 mM for butyraldehyde</KM>
        <KM evidence="2">2.2 mM for isobutyraldehyde</KM>
        <KM evidence="2">3.6 mM for crotonaldehyde</KM>
        <KM evidence="2">4.1 mM for glutaraldehyde</KM>
        <KM evidence="2">52.6 mM for 5-hydroxyvalerate</KM>
        <KM evidence="2">0.37 mM for hexanaldehyde</KM>
        <KM evidence="2">0.29 mM for benzaldehyde</KM>
        <KM evidence="2">0.135 mM for furfural</KM>
        <KM evidence="2">6.6 mM for butanol</KM>
        <KM evidence="2">38.5 mM for 1,4-butanediol</KM>
        <KM evidence="2">0.011 mM for NADPH</KM>
        <KM evidence="2">0.012 mM for NADP(+)</KM>
        <text>kcat is 11.2 sec(-1) for acetaldehyde reduction. kcat is 11.6 sec(-1) for propionaldehyde reduction. kcat is 12.3 sec(-1) for glyceraldehyde reduction. kcat is 41.6 sec(-1) for butyraldehyde reduction. kcat is 32.1 sec(-1) for isobutyraldehyde reduction. kcat is 32.6 sec(-1) for crotonaldehyde reduction. kcat is 13.4 sec(-1) for glutaraldehyde reduction. kcat is 0.18 sec(-1) for 5-hydroxyvalerate reduction. kcat is 18.3 sec(-1) for hexanaldehyde reduction. kcat is 7.75 sec(-1) for benzaldehyde reduction. kcat is 12.5 sec(-1) for furfural reduction. kcat is 4.7 sec(-1) for butanol oxidation. kcat is 6.7 sec(-1) for 1,4-butanediol oxidation.</text>
    </kinetics>
    <temperatureDependence>
        <text evidence="2">Shows a constant increase in activity until 60 degrees Celsius using butyraldehyde as substrate.</text>
    </temperatureDependence>
</comment>
<comment type="similarity">
    <text evidence="4">Belongs to the zinc-containing alcohol dehydrogenase family.</text>
</comment>
<organism>
    <name type="scientific">Escherichia coli (strain K12)</name>
    <dbReference type="NCBI Taxonomy" id="83333"/>
    <lineage>
        <taxon>Bacteria</taxon>
        <taxon>Pseudomonadati</taxon>
        <taxon>Pseudomonadota</taxon>
        <taxon>Gammaproteobacteria</taxon>
        <taxon>Enterobacterales</taxon>
        <taxon>Enterobacteriaceae</taxon>
        <taxon>Escherichia</taxon>
    </lineage>
</organism>
<gene>
    <name type="primary">yahK</name>
    <name type="ordered locus">b0325</name>
    <name type="ordered locus">JW0317</name>
</gene>
<feature type="chain" id="PRO_0000160888" description="Aldehyde reductase YahK">
    <location>
        <begin position="1"/>
        <end position="349"/>
    </location>
</feature>
<feature type="binding site">
    <location>
        <position position="40"/>
    </location>
    <ligand>
        <name>Zn(2+)</name>
        <dbReference type="ChEBI" id="CHEBI:29105"/>
        <label>1</label>
        <note>catalytic</note>
    </ligand>
</feature>
<feature type="binding site">
    <location>
        <position position="62"/>
    </location>
    <ligand>
        <name>Zn(2+)</name>
        <dbReference type="ChEBI" id="CHEBI:29105"/>
        <label>1</label>
        <note>catalytic</note>
    </ligand>
</feature>
<feature type="binding site">
    <location>
        <position position="93"/>
    </location>
    <ligand>
        <name>Zn(2+)</name>
        <dbReference type="ChEBI" id="CHEBI:29105"/>
        <label>2</label>
    </ligand>
</feature>
<feature type="binding site">
    <location>
        <position position="96"/>
    </location>
    <ligand>
        <name>Zn(2+)</name>
        <dbReference type="ChEBI" id="CHEBI:29105"/>
        <label>2</label>
    </ligand>
</feature>
<feature type="binding site">
    <location>
        <position position="99"/>
    </location>
    <ligand>
        <name>Zn(2+)</name>
        <dbReference type="ChEBI" id="CHEBI:29105"/>
        <label>2</label>
    </ligand>
</feature>
<feature type="binding site">
    <location>
        <position position="107"/>
    </location>
    <ligand>
        <name>Zn(2+)</name>
        <dbReference type="ChEBI" id="CHEBI:29105"/>
        <label>2</label>
    </ligand>
</feature>
<feature type="binding site">
    <location>
        <position position="158"/>
    </location>
    <ligand>
        <name>Zn(2+)</name>
        <dbReference type="ChEBI" id="CHEBI:29105"/>
        <label>1</label>
        <note>catalytic</note>
    </ligand>
</feature>
<feature type="sequence conflict" description="In Ref. 1; AAB18051." evidence="4" ref="1">
    <original>S</original>
    <variation>L</variation>
    <location>
        <position position="116"/>
    </location>
</feature>
<feature type="sequence conflict" description="In Ref. 1; AAB18051." evidence="4" ref="1">
    <original>H</original>
    <variation>Y</variation>
    <location>
        <position position="145"/>
    </location>
</feature>
<feature type="strand" evidence="5">
    <location>
        <begin position="4"/>
        <end position="10"/>
    </location>
</feature>
<feature type="strand" evidence="5">
    <location>
        <begin position="16"/>
        <end position="19"/>
    </location>
</feature>
<feature type="strand" evidence="5">
    <location>
        <begin position="29"/>
        <end position="38"/>
    </location>
</feature>
<feature type="helix" evidence="5">
    <location>
        <begin position="41"/>
        <end position="48"/>
    </location>
</feature>
<feature type="strand" evidence="5">
    <location>
        <begin position="56"/>
        <end position="58"/>
    </location>
</feature>
<feature type="strand" evidence="5">
    <location>
        <begin position="64"/>
        <end position="71"/>
    </location>
</feature>
<feature type="strand" evidence="5">
    <location>
        <begin position="83"/>
        <end position="86"/>
    </location>
</feature>
<feature type="strand" evidence="5">
    <location>
        <begin position="88"/>
        <end position="91"/>
    </location>
</feature>
<feature type="strand" evidence="5">
    <location>
        <begin position="94"/>
        <end position="96"/>
    </location>
</feature>
<feature type="helix" evidence="5">
    <location>
        <begin position="97"/>
        <end position="100"/>
    </location>
</feature>
<feature type="helix" evidence="5">
    <location>
        <begin position="104"/>
        <end position="106"/>
    </location>
</feature>
<feature type="turn" evidence="5">
    <location>
        <begin position="113"/>
        <end position="115"/>
    </location>
</feature>
<feature type="strand" evidence="5">
    <location>
        <begin position="128"/>
        <end position="136"/>
    </location>
</feature>
<feature type="helix" evidence="5">
    <location>
        <begin position="137"/>
        <end position="139"/>
    </location>
</feature>
<feature type="helix" evidence="5">
    <location>
        <begin position="147"/>
        <end position="149"/>
    </location>
</feature>
<feature type="helix" evidence="5">
    <location>
        <begin position="150"/>
        <end position="153"/>
    </location>
</feature>
<feature type="helix" evidence="5">
    <location>
        <begin position="154"/>
        <end position="157"/>
    </location>
</feature>
<feature type="helix" evidence="5">
    <location>
        <begin position="159"/>
        <end position="169"/>
    </location>
</feature>
<feature type="strand" evidence="5">
    <location>
        <begin position="177"/>
        <end position="181"/>
    </location>
</feature>
<feature type="helix" evidence="5">
    <location>
        <begin position="185"/>
        <end position="196"/>
    </location>
</feature>
<feature type="strand" evidence="5">
    <location>
        <begin position="200"/>
        <end position="207"/>
    </location>
</feature>
<feature type="helix" evidence="5">
    <location>
        <begin position="208"/>
        <end position="210"/>
    </location>
</feature>
<feature type="helix" evidence="5">
    <location>
        <begin position="211"/>
        <end position="217"/>
    </location>
</feature>
<feature type="strand" evidence="5">
    <location>
        <begin position="220"/>
        <end position="224"/>
    </location>
</feature>
<feature type="helix" evidence="5">
    <location>
        <begin position="228"/>
        <end position="232"/>
    </location>
</feature>
<feature type="turn" evidence="5">
    <location>
        <begin position="233"/>
        <end position="236"/>
    </location>
</feature>
<feature type="strand" evidence="5">
    <location>
        <begin position="238"/>
        <end position="243"/>
    </location>
</feature>
<feature type="helix" evidence="5">
    <location>
        <begin position="251"/>
        <end position="255"/>
    </location>
</feature>
<feature type="strand" evidence="5">
    <location>
        <begin position="258"/>
        <end position="266"/>
    </location>
</feature>
<feature type="helix" evidence="5">
    <location>
        <begin position="279"/>
        <end position="283"/>
    </location>
</feature>
<feature type="turn" evidence="5">
    <location>
        <begin position="284"/>
        <end position="286"/>
    </location>
</feature>
<feature type="strand" evidence="5">
    <location>
        <begin position="288"/>
        <end position="291"/>
    </location>
</feature>
<feature type="helix" evidence="5">
    <location>
        <begin position="297"/>
        <end position="310"/>
    </location>
</feature>
<feature type="strand" evidence="5">
    <location>
        <begin position="316"/>
        <end position="319"/>
    </location>
</feature>
<feature type="helix" evidence="5">
    <location>
        <begin position="321"/>
        <end position="323"/>
    </location>
</feature>
<feature type="helix" evidence="5">
    <location>
        <begin position="324"/>
        <end position="332"/>
    </location>
</feature>
<feature type="strand" evidence="5">
    <location>
        <begin position="336"/>
        <end position="343"/>
    </location>
</feature>
<feature type="helix" evidence="5">
    <location>
        <begin position="344"/>
        <end position="347"/>
    </location>
</feature>
<name>YAHK_ECOLI</name>